<feature type="chain" id="PRO_0000356978" description="Kynureninase 2">
    <location>
        <begin position="1"/>
        <end position="474"/>
    </location>
</feature>
<feature type="binding site" evidence="1">
    <location>
        <position position="144"/>
    </location>
    <ligand>
        <name>pyridoxal 5'-phosphate</name>
        <dbReference type="ChEBI" id="CHEBI:597326"/>
    </ligand>
</feature>
<feature type="binding site" evidence="1">
    <location>
        <position position="145"/>
    </location>
    <ligand>
        <name>pyridoxal 5'-phosphate</name>
        <dbReference type="ChEBI" id="CHEBI:597326"/>
    </ligand>
</feature>
<feature type="binding site" evidence="1">
    <location>
        <begin position="172"/>
        <end position="175"/>
    </location>
    <ligand>
        <name>pyridoxal 5'-phosphate</name>
        <dbReference type="ChEBI" id="CHEBI:597326"/>
    </ligand>
</feature>
<feature type="binding site" evidence="1">
    <location>
        <position position="258"/>
    </location>
    <ligand>
        <name>pyridoxal 5'-phosphate</name>
        <dbReference type="ChEBI" id="CHEBI:597326"/>
    </ligand>
</feature>
<feature type="binding site" evidence="1">
    <location>
        <position position="261"/>
    </location>
    <ligand>
        <name>pyridoxal 5'-phosphate</name>
        <dbReference type="ChEBI" id="CHEBI:597326"/>
    </ligand>
</feature>
<feature type="binding site" evidence="1">
    <location>
        <position position="283"/>
    </location>
    <ligand>
        <name>pyridoxal 5'-phosphate</name>
        <dbReference type="ChEBI" id="CHEBI:597326"/>
    </ligand>
</feature>
<feature type="binding site" evidence="1">
    <location>
        <position position="323"/>
    </location>
    <ligand>
        <name>pyridoxal 5'-phosphate</name>
        <dbReference type="ChEBI" id="CHEBI:597326"/>
    </ligand>
</feature>
<feature type="binding site" evidence="1">
    <location>
        <position position="351"/>
    </location>
    <ligand>
        <name>pyridoxal 5'-phosphate</name>
        <dbReference type="ChEBI" id="CHEBI:597326"/>
    </ligand>
</feature>
<feature type="modified residue" description="N6-(pyridoxal phosphate)lysine" evidence="1">
    <location>
        <position position="284"/>
    </location>
</feature>
<proteinExistence type="inferred from homology"/>
<organism>
    <name type="scientific">Emericella nidulans (strain FGSC A4 / ATCC 38163 / CBS 112.46 / NRRL 194 / M139)</name>
    <name type="common">Aspergillus nidulans</name>
    <dbReference type="NCBI Taxonomy" id="227321"/>
    <lineage>
        <taxon>Eukaryota</taxon>
        <taxon>Fungi</taxon>
        <taxon>Dikarya</taxon>
        <taxon>Ascomycota</taxon>
        <taxon>Pezizomycotina</taxon>
        <taxon>Eurotiomycetes</taxon>
        <taxon>Eurotiomycetidae</taxon>
        <taxon>Eurotiales</taxon>
        <taxon>Aspergillaceae</taxon>
        <taxon>Aspergillus</taxon>
        <taxon>Aspergillus subgen. Nidulantes</taxon>
    </lineage>
</organism>
<accession>Q5BC73</accession>
<accession>C8VKF6</accession>
<comment type="function">
    <text evidence="1">Catalyzes the cleavage of L-kynurenine (L-Kyn) and L-3-hydroxykynurenine (L-3OHKyn) into anthranilic acid (AA) and 3-hydroxyanthranilic acid (3-OHAA), respectively.</text>
</comment>
<comment type="catalytic activity">
    <reaction evidence="1">
        <text>L-kynurenine + H2O = anthranilate + L-alanine + H(+)</text>
        <dbReference type="Rhea" id="RHEA:16813"/>
        <dbReference type="ChEBI" id="CHEBI:15377"/>
        <dbReference type="ChEBI" id="CHEBI:15378"/>
        <dbReference type="ChEBI" id="CHEBI:16567"/>
        <dbReference type="ChEBI" id="CHEBI:57959"/>
        <dbReference type="ChEBI" id="CHEBI:57972"/>
        <dbReference type="EC" id="3.7.1.3"/>
    </reaction>
</comment>
<comment type="catalytic activity">
    <reaction evidence="1">
        <text>3-hydroxy-L-kynurenine + H2O = 3-hydroxyanthranilate + L-alanine + H(+)</text>
        <dbReference type="Rhea" id="RHEA:25143"/>
        <dbReference type="ChEBI" id="CHEBI:15377"/>
        <dbReference type="ChEBI" id="CHEBI:15378"/>
        <dbReference type="ChEBI" id="CHEBI:36559"/>
        <dbReference type="ChEBI" id="CHEBI:57972"/>
        <dbReference type="ChEBI" id="CHEBI:58125"/>
        <dbReference type="EC" id="3.7.1.3"/>
    </reaction>
</comment>
<comment type="cofactor">
    <cofactor evidence="1">
        <name>pyridoxal 5'-phosphate</name>
        <dbReference type="ChEBI" id="CHEBI:597326"/>
    </cofactor>
</comment>
<comment type="pathway">
    <text evidence="1">Amino-acid degradation; L-kynurenine degradation; L-alanine and anthranilate from L-kynurenine: step 1/1.</text>
</comment>
<comment type="pathway">
    <text evidence="1">Cofactor biosynthesis; NAD(+) biosynthesis; quinolinate from L-kynurenine: step 2/3.</text>
</comment>
<comment type="subunit">
    <text evidence="1">Homodimer.</text>
</comment>
<comment type="subcellular location">
    <subcellularLocation>
        <location evidence="1">Cytoplasm</location>
    </subcellularLocation>
</comment>
<comment type="similarity">
    <text evidence="1">Belongs to the kynureninase family.</text>
</comment>
<comment type="sequence caution" evidence="2">
    <conflict type="erroneous gene model prediction">
        <sequence resource="EMBL-CDS" id="EAA65022"/>
    </conflict>
</comment>
<evidence type="ECO:0000255" key="1">
    <source>
        <dbReference type="HAMAP-Rule" id="MF_03017"/>
    </source>
</evidence>
<evidence type="ECO:0000305" key="2"/>
<name>KYNU2_EMENI</name>
<sequence>MSNHVNGVNGVNGVNGVKPVFPENAASKEYAKALDAADPLASFRDKFIIPSKANIQSKRLAKPNISADPCIYFCGNSLGLQPKATAKYMEAHLDTWASIGVNGHFTKIEDSPLDPWWVMAEQAAGSMSKLVGAAPEEVIAMGTLTSNLHLLLASFYKPTATKHKILLDWKAFPSDHYAIESHIAWHDGLDPKKSMVLIGPDEGEYEIPTQKILSIIDEHADEAALILLPGIQYYTGQYFDINTITEYAHSKGLMVGWDLAHAFANVELKLHEWDVDFAVWCTYKYANAGPGSMGGLFVHEKHGKVDYSQGEDSPQFRHRLAGWYGGDRSVRFKMDNKFRPIPGAGGFQLSTSSATDLTCLNASLSIFDQTSISELRRKSVQLTAYLEYLLLKDTTDETRPFRIITPSNPEERGAQLSLLLKPGLLQRVADKLQSASIVCDKREPGVVRVAPAPLYNTYSEVWQFVEQLKAAFQE</sequence>
<protein>
    <recommendedName>
        <fullName evidence="1">Kynureninase 2</fullName>
        <ecNumber evidence="1">3.7.1.3</ecNumber>
    </recommendedName>
    <alternativeName>
        <fullName evidence="1">Biosynthesis of nicotinic acid protein 5-2</fullName>
    </alternativeName>
    <alternativeName>
        <fullName evidence="1">L-kynurenine hydrolase 2</fullName>
    </alternativeName>
</protein>
<dbReference type="EC" id="3.7.1.3" evidence="1"/>
<dbReference type="EMBL" id="AACD01000029">
    <property type="protein sequence ID" value="EAA65022.1"/>
    <property type="status" value="ALT_SEQ"/>
    <property type="molecule type" value="Genomic_DNA"/>
</dbReference>
<dbReference type="EMBL" id="BN001307">
    <property type="protein sequence ID" value="CBF85703.1"/>
    <property type="molecule type" value="Genomic_DNA"/>
</dbReference>
<dbReference type="RefSeq" id="XP_659461.1">
    <property type="nucleotide sequence ID" value="XM_654369.1"/>
</dbReference>
<dbReference type="SMR" id="Q5BC73"/>
<dbReference type="FunCoup" id="Q5BC73">
    <property type="interactions" value="208"/>
</dbReference>
<dbReference type="STRING" id="227321.Q5BC73"/>
<dbReference type="EnsemblFungi" id="CBF85703">
    <property type="protein sequence ID" value="CBF85703"/>
    <property type="gene ID" value="ANIA_01857"/>
</dbReference>
<dbReference type="VEuPathDB" id="FungiDB:AN1857"/>
<dbReference type="eggNOG" id="KOG3846">
    <property type="taxonomic scope" value="Eukaryota"/>
</dbReference>
<dbReference type="HOGENOM" id="CLU_003433_4_0_1"/>
<dbReference type="InParanoid" id="Q5BC73"/>
<dbReference type="OMA" id="SHVAYRS"/>
<dbReference type="OrthoDB" id="5978656at2759"/>
<dbReference type="UniPathway" id="UPA00253">
    <property type="reaction ID" value="UER00329"/>
</dbReference>
<dbReference type="UniPathway" id="UPA00334">
    <property type="reaction ID" value="UER00455"/>
</dbReference>
<dbReference type="Proteomes" id="UP000000560">
    <property type="component" value="Chromosome VII"/>
</dbReference>
<dbReference type="GO" id="GO:0005737">
    <property type="term" value="C:cytoplasm"/>
    <property type="evidence" value="ECO:0000318"/>
    <property type="project" value="GO_Central"/>
</dbReference>
<dbReference type="GO" id="GO:0030429">
    <property type="term" value="F:kynureninase activity"/>
    <property type="evidence" value="ECO:0000318"/>
    <property type="project" value="GO_Central"/>
</dbReference>
<dbReference type="GO" id="GO:0030170">
    <property type="term" value="F:pyridoxal phosphate binding"/>
    <property type="evidence" value="ECO:0007669"/>
    <property type="project" value="UniProtKB-UniRule"/>
</dbReference>
<dbReference type="GO" id="GO:0034354">
    <property type="term" value="P:'de novo' NAD biosynthetic process from L-tryptophan"/>
    <property type="evidence" value="ECO:0007669"/>
    <property type="project" value="UniProtKB-UniRule"/>
</dbReference>
<dbReference type="GO" id="GO:0043420">
    <property type="term" value="P:anthranilate metabolic process"/>
    <property type="evidence" value="ECO:0000318"/>
    <property type="project" value="GO_Central"/>
</dbReference>
<dbReference type="GO" id="GO:0097053">
    <property type="term" value="P:L-kynurenine catabolic process"/>
    <property type="evidence" value="ECO:0007669"/>
    <property type="project" value="UniProtKB-UniRule"/>
</dbReference>
<dbReference type="GO" id="GO:0019441">
    <property type="term" value="P:L-tryptophan catabolic process to kynurenine"/>
    <property type="evidence" value="ECO:0000318"/>
    <property type="project" value="GO_Central"/>
</dbReference>
<dbReference type="GO" id="GO:0019805">
    <property type="term" value="P:quinolinate biosynthetic process"/>
    <property type="evidence" value="ECO:0007669"/>
    <property type="project" value="UniProtKB-UniRule"/>
</dbReference>
<dbReference type="FunFam" id="3.40.640.10:FF:000031">
    <property type="entry name" value="Kynureninase"/>
    <property type="match status" value="1"/>
</dbReference>
<dbReference type="Gene3D" id="3.90.1150.10">
    <property type="entry name" value="Aspartate Aminotransferase, domain 1"/>
    <property type="match status" value="1"/>
</dbReference>
<dbReference type="Gene3D" id="3.40.640.10">
    <property type="entry name" value="Type I PLP-dependent aspartate aminotransferase-like (Major domain)"/>
    <property type="match status" value="1"/>
</dbReference>
<dbReference type="HAMAP" id="MF_01970">
    <property type="entry name" value="Kynureninase"/>
    <property type="match status" value="1"/>
</dbReference>
<dbReference type="InterPro" id="IPR000192">
    <property type="entry name" value="Aminotrans_V_dom"/>
</dbReference>
<dbReference type="InterPro" id="IPR010111">
    <property type="entry name" value="Kynureninase"/>
</dbReference>
<dbReference type="InterPro" id="IPR015424">
    <property type="entry name" value="PyrdxlP-dep_Trfase"/>
</dbReference>
<dbReference type="InterPro" id="IPR015421">
    <property type="entry name" value="PyrdxlP-dep_Trfase_major"/>
</dbReference>
<dbReference type="InterPro" id="IPR015422">
    <property type="entry name" value="PyrdxlP-dep_Trfase_small"/>
</dbReference>
<dbReference type="NCBIfam" id="TIGR01814">
    <property type="entry name" value="kynureninase"/>
    <property type="match status" value="1"/>
</dbReference>
<dbReference type="PANTHER" id="PTHR14084">
    <property type="entry name" value="KYNURENINASE"/>
    <property type="match status" value="1"/>
</dbReference>
<dbReference type="PANTHER" id="PTHR14084:SF2">
    <property type="entry name" value="KYNURENINASE 2"/>
    <property type="match status" value="1"/>
</dbReference>
<dbReference type="Pfam" id="PF00266">
    <property type="entry name" value="Aminotran_5"/>
    <property type="match status" value="1"/>
</dbReference>
<dbReference type="Pfam" id="PF22580">
    <property type="entry name" value="KYNU_C"/>
    <property type="match status" value="1"/>
</dbReference>
<dbReference type="PIRSF" id="PIRSF038800">
    <property type="entry name" value="KYNU"/>
    <property type="match status" value="1"/>
</dbReference>
<dbReference type="SUPFAM" id="SSF53383">
    <property type="entry name" value="PLP-dependent transferases"/>
    <property type="match status" value="1"/>
</dbReference>
<keyword id="KW-0963">Cytoplasm</keyword>
<keyword id="KW-0378">Hydrolase</keyword>
<keyword id="KW-0662">Pyridine nucleotide biosynthesis</keyword>
<keyword id="KW-0663">Pyridoxal phosphate</keyword>
<keyword id="KW-1185">Reference proteome</keyword>
<reference key="1">
    <citation type="journal article" date="2005" name="Nature">
        <title>Sequencing of Aspergillus nidulans and comparative analysis with A. fumigatus and A. oryzae.</title>
        <authorList>
            <person name="Galagan J.E."/>
            <person name="Calvo S.E."/>
            <person name="Cuomo C."/>
            <person name="Ma L.-J."/>
            <person name="Wortman J.R."/>
            <person name="Batzoglou S."/>
            <person name="Lee S.-I."/>
            <person name="Bastuerkmen M."/>
            <person name="Spevak C.C."/>
            <person name="Clutterbuck J."/>
            <person name="Kapitonov V."/>
            <person name="Jurka J."/>
            <person name="Scazzocchio C."/>
            <person name="Farman M.L."/>
            <person name="Butler J."/>
            <person name="Purcell S."/>
            <person name="Harris S."/>
            <person name="Braus G.H."/>
            <person name="Draht O."/>
            <person name="Busch S."/>
            <person name="D'Enfert C."/>
            <person name="Bouchier C."/>
            <person name="Goldman G.H."/>
            <person name="Bell-Pedersen D."/>
            <person name="Griffiths-Jones S."/>
            <person name="Doonan J.H."/>
            <person name="Yu J."/>
            <person name="Vienken K."/>
            <person name="Pain A."/>
            <person name="Freitag M."/>
            <person name="Selker E.U."/>
            <person name="Archer D.B."/>
            <person name="Penalva M.A."/>
            <person name="Oakley B.R."/>
            <person name="Momany M."/>
            <person name="Tanaka T."/>
            <person name="Kumagai T."/>
            <person name="Asai K."/>
            <person name="Machida M."/>
            <person name="Nierman W.C."/>
            <person name="Denning D.W."/>
            <person name="Caddick M.X."/>
            <person name="Hynes M."/>
            <person name="Paoletti M."/>
            <person name="Fischer R."/>
            <person name="Miller B.L."/>
            <person name="Dyer P.S."/>
            <person name="Sachs M.S."/>
            <person name="Osmani S.A."/>
            <person name="Birren B.W."/>
        </authorList>
    </citation>
    <scope>NUCLEOTIDE SEQUENCE [LARGE SCALE GENOMIC DNA]</scope>
    <source>
        <strain>FGSC A4 / ATCC 38163 / CBS 112.46 / NRRL 194 / M139</strain>
    </source>
</reference>
<reference key="2">
    <citation type="journal article" date="2009" name="Fungal Genet. Biol.">
        <title>The 2008 update of the Aspergillus nidulans genome annotation: a community effort.</title>
        <authorList>
            <person name="Wortman J.R."/>
            <person name="Gilsenan J.M."/>
            <person name="Joardar V."/>
            <person name="Deegan J."/>
            <person name="Clutterbuck J."/>
            <person name="Andersen M.R."/>
            <person name="Archer D."/>
            <person name="Bencina M."/>
            <person name="Braus G."/>
            <person name="Coutinho P."/>
            <person name="von Dohren H."/>
            <person name="Doonan J."/>
            <person name="Driessen A.J."/>
            <person name="Durek P."/>
            <person name="Espeso E."/>
            <person name="Fekete E."/>
            <person name="Flipphi M."/>
            <person name="Estrada C.G."/>
            <person name="Geysens S."/>
            <person name="Goldman G."/>
            <person name="de Groot P.W."/>
            <person name="Hansen K."/>
            <person name="Harris S.D."/>
            <person name="Heinekamp T."/>
            <person name="Helmstaedt K."/>
            <person name="Henrissat B."/>
            <person name="Hofmann G."/>
            <person name="Homan T."/>
            <person name="Horio T."/>
            <person name="Horiuchi H."/>
            <person name="James S."/>
            <person name="Jones M."/>
            <person name="Karaffa L."/>
            <person name="Karanyi Z."/>
            <person name="Kato M."/>
            <person name="Keller N."/>
            <person name="Kelly D.E."/>
            <person name="Kiel J.A."/>
            <person name="Kim J.M."/>
            <person name="van der Klei I.J."/>
            <person name="Klis F.M."/>
            <person name="Kovalchuk A."/>
            <person name="Krasevec N."/>
            <person name="Kubicek C.P."/>
            <person name="Liu B."/>
            <person name="Maccabe A."/>
            <person name="Meyer V."/>
            <person name="Mirabito P."/>
            <person name="Miskei M."/>
            <person name="Mos M."/>
            <person name="Mullins J."/>
            <person name="Nelson D.R."/>
            <person name="Nielsen J."/>
            <person name="Oakley B.R."/>
            <person name="Osmani S.A."/>
            <person name="Pakula T."/>
            <person name="Paszewski A."/>
            <person name="Paulsen I."/>
            <person name="Pilsyk S."/>
            <person name="Pocsi I."/>
            <person name="Punt P.J."/>
            <person name="Ram A.F."/>
            <person name="Ren Q."/>
            <person name="Robellet X."/>
            <person name="Robson G."/>
            <person name="Seiboth B."/>
            <person name="van Solingen P."/>
            <person name="Specht T."/>
            <person name="Sun J."/>
            <person name="Taheri-Talesh N."/>
            <person name="Takeshita N."/>
            <person name="Ussery D."/>
            <person name="vanKuyk P.A."/>
            <person name="Visser H."/>
            <person name="van de Vondervoort P.J."/>
            <person name="de Vries R.P."/>
            <person name="Walton J."/>
            <person name="Xiang X."/>
            <person name="Xiong Y."/>
            <person name="Zeng A.P."/>
            <person name="Brandt B.W."/>
            <person name="Cornell M.J."/>
            <person name="van den Hondel C.A."/>
            <person name="Visser J."/>
            <person name="Oliver S.G."/>
            <person name="Turner G."/>
        </authorList>
    </citation>
    <scope>GENOME REANNOTATION</scope>
    <source>
        <strain>FGSC A4 / ATCC 38163 / CBS 112.46 / NRRL 194 / M139</strain>
    </source>
</reference>
<gene>
    <name type="primary">bna5-2</name>
    <name type="ORF">AN1857</name>
</gene>